<keyword id="KW-0143">Chaperone</keyword>
<keyword id="KW-0963">Cytoplasm</keyword>
<keyword id="KW-0346">Stress response</keyword>
<accession>Q3YSZ3</accession>
<gene>
    <name evidence="1" type="primary">grpE</name>
    <name type="ordered locus">Ecaj_0111</name>
</gene>
<dbReference type="EMBL" id="CP000107">
    <property type="protein sequence ID" value="AAZ68162.1"/>
    <property type="molecule type" value="Genomic_DNA"/>
</dbReference>
<dbReference type="RefSeq" id="WP_011304240.1">
    <property type="nucleotide sequence ID" value="NC_007354.1"/>
</dbReference>
<dbReference type="SMR" id="Q3YSZ3"/>
<dbReference type="FunCoup" id="Q3YSZ3">
    <property type="interactions" value="287"/>
</dbReference>
<dbReference type="STRING" id="269484.Ecaj_0111"/>
<dbReference type="KEGG" id="ecn:Ecaj_0111"/>
<dbReference type="eggNOG" id="COG0576">
    <property type="taxonomic scope" value="Bacteria"/>
</dbReference>
<dbReference type="HOGENOM" id="CLU_057217_6_2_5"/>
<dbReference type="InParanoid" id="Q3YSZ3"/>
<dbReference type="Proteomes" id="UP000000435">
    <property type="component" value="Chromosome"/>
</dbReference>
<dbReference type="GO" id="GO:0005737">
    <property type="term" value="C:cytoplasm"/>
    <property type="evidence" value="ECO:0007669"/>
    <property type="project" value="UniProtKB-SubCell"/>
</dbReference>
<dbReference type="GO" id="GO:0000774">
    <property type="term" value="F:adenyl-nucleotide exchange factor activity"/>
    <property type="evidence" value="ECO:0007669"/>
    <property type="project" value="InterPro"/>
</dbReference>
<dbReference type="GO" id="GO:0042803">
    <property type="term" value="F:protein homodimerization activity"/>
    <property type="evidence" value="ECO:0007669"/>
    <property type="project" value="InterPro"/>
</dbReference>
<dbReference type="GO" id="GO:0051087">
    <property type="term" value="F:protein-folding chaperone binding"/>
    <property type="evidence" value="ECO:0007669"/>
    <property type="project" value="InterPro"/>
</dbReference>
<dbReference type="GO" id="GO:0051082">
    <property type="term" value="F:unfolded protein binding"/>
    <property type="evidence" value="ECO:0007669"/>
    <property type="project" value="TreeGrafter"/>
</dbReference>
<dbReference type="GO" id="GO:0006457">
    <property type="term" value="P:protein folding"/>
    <property type="evidence" value="ECO:0007669"/>
    <property type="project" value="InterPro"/>
</dbReference>
<dbReference type="CDD" id="cd00446">
    <property type="entry name" value="GrpE"/>
    <property type="match status" value="1"/>
</dbReference>
<dbReference type="FunFam" id="2.30.22.10:FF:000001">
    <property type="entry name" value="Protein GrpE"/>
    <property type="match status" value="1"/>
</dbReference>
<dbReference type="Gene3D" id="3.90.20.20">
    <property type="match status" value="1"/>
</dbReference>
<dbReference type="Gene3D" id="2.30.22.10">
    <property type="entry name" value="Head domain of nucleotide exchange factor GrpE"/>
    <property type="match status" value="1"/>
</dbReference>
<dbReference type="HAMAP" id="MF_01151">
    <property type="entry name" value="GrpE"/>
    <property type="match status" value="1"/>
</dbReference>
<dbReference type="InterPro" id="IPR000740">
    <property type="entry name" value="GrpE"/>
</dbReference>
<dbReference type="InterPro" id="IPR013805">
    <property type="entry name" value="GrpE_coiled_coil"/>
</dbReference>
<dbReference type="InterPro" id="IPR009012">
    <property type="entry name" value="GrpE_head"/>
</dbReference>
<dbReference type="PANTHER" id="PTHR21237">
    <property type="entry name" value="GRPE PROTEIN"/>
    <property type="match status" value="1"/>
</dbReference>
<dbReference type="PANTHER" id="PTHR21237:SF23">
    <property type="entry name" value="GRPE PROTEIN HOMOLOG, MITOCHONDRIAL"/>
    <property type="match status" value="1"/>
</dbReference>
<dbReference type="Pfam" id="PF01025">
    <property type="entry name" value="GrpE"/>
    <property type="match status" value="1"/>
</dbReference>
<dbReference type="PRINTS" id="PR00773">
    <property type="entry name" value="GRPEPROTEIN"/>
</dbReference>
<dbReference type="SUPFAM" id="SSF58014">
    <property type="entry name" value="Coiled-coil domain of nucleotide exchange factor GrpE"/>
    <property type="match status" value="1"/>
</dbReference>
<dbReference type="SUPFAM" id="SSF51064">
    <property type="entry name" value="Head domain of nucleotide exchange factor GrpE"/>
    <property type="match status" value="1"/>
</dbReference>
<dbReference type="PROSITE" id="PS01071">
    <property type="entry name" value="GRPE"/>
    <property type="match status" value="1"/>
</dbReference>
<name>GRPE_EHRCJ</name>
<feature type="chain" id="PRO_1000053577" description="Protein GrpE">
    <location>
        <begin position="1"/>
        <end position="199"/>
    </location>
</feature>
<feature type="region of interest" description="Disordered" evidence="2">
    <location>
        <begin position="1"/>
        <end position="36"/>
    </location>
</feature>
<feature type="compositionally biased region" description="Polar residues" evidence="2">
    <location>
        <begin position="1"/>
        <end position="17"/>
    </location>
</feature>
<organism>
    <name type="scientific">Ehrlichia canis (strain Jake)</name>
    <dbReference type="NCBI Taxonomy" id="269484"/>
    <lineage>
        <taxon>Bacteria</taxon>
        <taxon>Pseudomonadati</taxon>
        <taxon>Pseudomonadota</taxon>
        <taxon>Alphaproteobacteria</taxon>
        <taxon>Rickettsiales</taxon>
        <taxon>Anaplasmataceae</taxon>
        <taxon>Ehrlichia</taxon>
    </lineage>
</organism>
<sequence>MSDSDNNTKSQQNNPTQTDEKSGEEIQSNQKPQRKFTAVLNKKKEKLNEDLSELDKLKQQLAHFQNQFRLAVADKENVKRIMQKNIDDTSIYAISNFARDLLSSCDNLETSLKNLKEDDSIHAGVLMTYKELLNTLERHNITRIDPIGEKFNPQFHKAVSQMTDEDKDENTILHVVQPGYIIKDKLLRPASVIISKKSD</sequence>
<protein>
    <recommendedName>
        <fullName evidence="1">Protein GrpE</fullName>
    </recommendedName>
    <alternativeName>
        <fullName evidence="1">HSP-70 cofactor</fullName>
    </alternativeName>
</protein>
<comment type="function">
    <text evidence="1">Participates actively in the response to hyperosmotic and heat shock by preventing the aggregation of stress-denatured proteins, in association with DnaK and GrpE. It is the nucleotide exchange factor for DnaK and may function as a thermosensor. Unfolded proteins bind initially to DnaJ; upon interaction with the DnaJ-bound protein, DnaK hydrolyzes its bound ATP, resulting in the formation of a stable complex. GrpE releases ADP from DnaK; ATP binding to DnaK triggers the release of the substrate protein, thus completing the reaction cycle. Several rounds of ATP-dependent interactions between DnaJ, DnaK and GrpE are required for fully efficient folding.</text>
</comment>
<comment type="subunit">
    <text evidence="1">Homodimer.</text>
</comment>
<comment type="subcellular location">
    <subcellularLocation>
        <location evidence="1">Cytoplasm</location>
    </subcellularLocation>
</comment>
<comment type="similarity">
    <text evidence="1">Belongs to the GrpE family.</text>
</comment>
<proteinExistence type="inferred from homology"/>
<evidence type="ECO:0000255" key="1">
    <source>
        <dbReference type="HAMAP-Rule" id="MF_01151"/>
    </source>
</evidence>
<evidence type="ECO:0000256" key="2">
    <source>
        <dbReference type="SAM" id="MobiDB-lite"/>
    </source>
</evidence>
<reference key="1">
    <citation type="journal article" date="2006" name="J. Bacteriol.">
        <title>The genome of the obligately intracellular bacterium Ehrlichia canis reveals themes of complex membrane structure and immune evasion strategies.</title>
        <authorList>
            <person name="Mavromatis K."/>
            <person name="Doyle C.K."/>
            <person name="Lykidis A."/>
            <person name="Ivanova N."/>
            <person name="Francino M.P."/>
            <person name="Chain P."/>
            <person name="Shin M."/>
            <person name="Malfatti S."/>
            <person name="Larimer F."/>
            <person name="Copeland A."/>
            <person name="Detter J.C."/>
            <person name="Land M."/>
            <person name="Richardson P.M."/>
            <person name="Yu X.J."/>
            <person name="Walker D.H."/>
            <person name="McBride J.W."/>
            <person name="Kyrpides N.C."/>
        </authorList>
    </citation>
    <scope>NUCLEOTIDE SEQUENCE [LARGE SCALE GENOMIC DNA]</scope>
    <source>
        <strain>Jake</strain>
    </source>
</reference>